<keyword id="KW-0067">ATP-binding</keyword>
<keyword id="KW-0418">Kinase</keyword>
<keyword id="KW-0460">Magnesium</keyword>
<keyword id="KW-0479">Metal-binding</keyword>
<keyword id="KW-0547">Nucleotide-binding</keyword>
<keyword id="KW-0597">Phosphoprotein</keyword>
<keyword id="KW-1185">Reference proteome</keyword>
<keyword id="KW-0808">Transferase</keyword>
<name>PPK1_MYCTO</name>
<evidence type="ECO:0000255" key="1">
    <source>
        <dbReference type="HAMAP-Rule" id="MF_00347"/>
    </source>
</evidence>
<evidence type="ECO:0000256" key="2">
    <source>
        <dbReference type="SAM" id="MobiDB-lite"/>
    </source>
</evidence>
<evidence type="ECO:0000305" key="3"/>
<proteinExistence type="inferred from homology"/>
<organism>
    <name type="scientific">Mycobacterium tuberculosis (strain CDC 1551 / Oshkosh)</name>
    <dbReference type="NCBI Taxonomy" id="83331"/>
    <lineage>
        <taxon>Bacteria</taxon>
        <taxon>Bacillati</taxon>
        <taxon>Actinomycetota</taxon>
        <taxon>Actinomycetes</taxon>
        <taxon>Mycobacteriales</taxon>
        <taxon>Mycobacteriaceae</taxon>
        <taxon>Mycobacterium</taxon>
        <taxon>Mycobacterium tuberculosis complex</taxon>
    </lineage>
</organism>
<gene>
    <name evidence="1" type="primary">ppk</name>
    <name type="ordered locus">MT3062</name>
</gene>
<dbReference type="EC" id="2.7.4.1" evidence="1"/>
<dbReference type="EMBL" id="AE000516">
    <property type="protein sequence ID" value="AAK47391.1"/>
    <property type="status" value="ALT_INIT"/>
    <property type="molecule type" value="Genomic_DNA"/>
</dbReference>
<dbReference type="PIR" id="E70673">
    <property type="entry name" value="E70673"/>
</dbReference>
<dbReference type="RefSeq" id="WP_003415097.1">
    <property type="nucleotide sequence ID" value="NZ_KK341227.1"/>
</dbReference>
<dbReference type="SMR" id="P9WHV8"/>
<dbReference type="KEGG" id="mtc:MT3062"/>
<dbReference type="PATRIC" id="fig|83331.31.peg.3305"/>
<dbReference type="HOGENOM" id="CLU_009678_5_0_11"/>
<dbReference type="Proteomes" id="UP000001020">
    <property type="component" value="Chromosome"/>
</dbReference>
<dbReference type="GO" id="GO:0009358">
    <property type="term" value="C:polyphosphate kinase complex"/>
    <property type="evidence" value="ECO:0007669"/>
    <property type="project" value="InterPro"/>
</dbReference>
<dbReference type="GO" id="GO:0005524">
    <property type="term" value="F:ATP binding"/>
    <property type="evidence" value="ECO:0007669"/>
    <property type="project" value="UniProtKB-KW"/>
</dbReference>
<dbReference type="GO" id="GO:0046872">
    <property type="term" value="F:metal ion binding"/>
    <property type="evidence" value="ECO:0007669"/>
    <property type="project" value="UniProtKB-KW"/>
</dbReference>
<dbReference type="GO" id="GO:0008976">
    <property type="term" value="F:polyphosphate kinase activity"/>
    <property type="evidence" value="ECO:0007669"/>
    <property type="project" value="UniProtKB-UniRule"/>
</dbReference>
<dbReference type="GO" id="GO:0006799">
    <property type="term" value="P:polyphosphate biosynthetic process"/>
    <property type="evidence" value="ECO:0007669"/>
    <property type="project" value="UniProtKB-UniRule"/>
</dbReference>
<dbReference type="CDD" id="cd09165">
    <property type="entry name" value="PLDc_PaPPK1_C1_like"/>
    <property type="match status" value="1"/>
</dbReference>
<dbReference type="FunFam" id="1.20.58.310:FF:000002">
    <property type="entry name" value="Polyphosphate kinase"/>
    <property type="match status" value="1"/>
</dbReference>
<dbReference type="FunFam" id="3.30.1840.10:FF:000002">
    <property type="entry name" value="Polyphosphate kinase"/>
    <property type="match status" value="1"/>
</dbReference>
<dbReference type="FunFam" id="3.30.870.10:FF:000001">
    <property type="entry name" value="Polyphosphate kinase"/>
    <property type="match status" value="1"/>
</dbReference>
<dbReference type="Gene3D" id="3.30.870.10">
    <property type="entry name" value="Endonuclease Chain A"/>
    <property type="match status" value="2"/>
</dbReference>
<dbReference type="Gene3D" id="3.30.1840.10">
    <property type="entry name" value="Polyphosphate kinase middle domain"/>
    <property type="match status" value="1"/>
</dbReference>
<dbReference type="Gene3D" id="1.20.58.310">
    <property type="entry name" value="Polyphosphate kinase N-terminal domain"/>
    <property type="match status" value="1"/>
</dbReference>
<dbReference type="HAMAP" id="MF_00347">
    <property type="entry name" value="Polyphosphate_kinase"/>
    <property type="match status" value="1"/>
</dbReference>
<dbReference type="InterPro" id="IPR003414">
    <property type="entry name" value="PP_kinase"/>
</dbReference>
<dbReference type="InterPro" id="IPR041108">
    <property type="entry name" value="PP_kinase_C_1"/>
</dbReference>
<dbReference type="InterPro" id="IPR024953">
    <property type="entry name" value="PP_kinase_middle"/>
</dbReference>
<dbReference type="InterPro" id="IPR036830">
    <property type="entry name" value="PP_kinase_middle_dom_sf"/>
</dbReference>
<dbReference type="InterPro" id="IPR025200">
    <property type="entry name" value="PPK_C_dom2"/>
</dbReference>
<dbReference type="InterPro" id="IPR025198">
    <property type="entry name" value="PPK_N_dom"/>
</dbReference>
<dbReference type="InterPro" id="IPR036832">
    <property type="entry name" value="PPK_N_dom_sf"/>
</dbReference>
<dbReference type="NCBIfam" id="TIGR03705">
    <property type="entry name" value="poly_P_kin"/>
    <property type="match status" value="1"/>
</dbReference>
<dbReference type="NCBIfam" id="NF003917">
    <property type="entry name" value="PRK05443.1-1"/>
    <property type="match status" value="1"/>
</dbReference>
<dbReference type="NCBIfam" id="NF003918">
    <property type="entry name" value="PRK05443.1-2"/>
    <property type="match status" value="1"/>
</dbReference>
<dbReference type="NCBIfam" id="NF003921">
    <property type="entry name" value="PRK05443.2-2"/>
    <property type="match status" value="1"/>
</dbReference>
<dbReference type="NCBIfam" id="NF003922">
    <property type="entry name" value="PRK05443.2-3"/>
    <property type="match status" value="1"/>
</dbReference>
<dbReference type="PANTHER" id="PTHR30218">
    <property type="entry name" value="POLYPHOSPHATE KINASE"/>
    <property type="match status" value="1"/>
</dbReference>
<dbReference type="PANTHER" id="PTHR30218:SF0">
    <property type="entry name" value="POLYPHOSPHATE KINASE"/>
    <property type="match status" value="1"/>
</dbReference>
<dbReference type="Pfam" id="PF02503">
    <property type="entry name" value="PP_kinase"/>
    <property type="match status" value="1"/>
</dbReference>
<dbReference type="Pfam" id="PF13090">
    <property type="entry name" value="PP_kinase_C"/>
    <property type="match status" value="1"/>
</dbReference>
<dbReference type="Pfam" id="PF17941">
    <property type="entry name" value="PP_kinase_C_1"/>
    <property type="match status" value="1"/>
</dbReference>
<dbReference type="Pfam" id="PF13089">
    <property type="entry name" value="PP_kinase_N"/>
    <property type="match status" value="1"/>
</dbReference>
<dbReference type="PIRSF" id="PIRSF015589">
    <property type="entry name" value="PP_kinase"/>
    <property type="match status" value="1"/>
</dbReference>
<dbReference type="SUPFAM" id="SSF56024">
    <property type="entry name" value="Phospholipase D/nuclease"/>
    <property type="match status" value="2"/>
</dbReference>
<dbReference type="SUPFAM" id="SSF143724">
    <property type="entry name" value="PHP14-like"/>
    <property type="match status" value="1"/>
</dbReference>
<dbReference type="SUPFAM" id="SSF140356">
    <property type="entry name" value="PPK N-terminal domain-like"/>
    <property type="match status" value="1"/>
</dbReference>
<comment type="function">
    <text evidence="1">Catalyzes the reversible transfer of the terminal phosphate of ATP to form a long-chain polyphosphate (polyP).</text>
</comment>
<comment type="catalytic activity">
    <reaction evidence="1">
        <text>[phosphate](n) + ATP = [phosphate](n+1) + ADP</text>
        <dbReference type="Rhea" id="RHEA:19573"/>
        <dbReference type="Rhea" id="RHEA-COMP:9859"/>
        <dbReference type="Rhea" id="RHEA-COMP:14280"/>
        <dbReference type="ChEBI" id="CHEBI:16838"/>
        <dbReference type="ChEBI" id="CHEBI:30616"/>
        <dbReference type="ChEBI" id="CHEBI:456216"/>
        <dbReference type="EC" id="2.7.4.1"/>
    </reaction>
</comment>
<comment type="cofactor">
    <cofactor evidence="1">
        <name>Mg(2+)</name>
        <dbReference type="ChEBI" id="CHEBI:18420"/>
    </cofactor>
</comment>
<comment type="PTM">
    <text evidence="1">An intermediate of this reaction is the autophosphorylated ppk in which a phosphate is covalently linked to a histidine residue through a N-P bond.</text>
</comment>
<comment type="similarity">
    <text evidence="1">Belongs to the polyphosphate kinase 1 (PPK1) family.</text>
</comment>
<comment type="sequence caution" evidence="3">
    <conflict type="erroneous initiation">
        <sequence resource="EMBL-CDS" id="AAK47391"/>
    </conflict>
</comment>
<reference key="1">
    <citation type="journal article" date="2002" name="J. Bacteriol.">
        <title>Whole-genome comparison of Mycobacterium tuberculosis clinical and laboratory strains.</title>
        <authorList>
            <person name="Fleischmann R.D."/>
            <person name="Alland D."/>
            <person name="Eisen J.A."/>
            <person name="Carpenter L."/>
            <person name="White O."/>
            <person name="Peterson J.D."/>
            <person name="DeBoy R.T."/>
            <person name="Dodson R.J."/>
            <person name="Gwinn M.L."/>
            <person name="Haft D.H."/>
            <person name="Hickey E.K."/>
            <person name="Kolonay J.F."/>
            <person name="Nelson W.C."/>
            <person name="Umayam L.A."/>
            <person name="Ermolaeva M.D."/>
            <person name="Salzberg S.L."/>
            <person name="Delcher A."/>
            <person name="Utterback T.R."/>
            <person name="Weidman J.F."/>
            <person name="Khouri H.M."/>
            <person name="Gill J."/>
            <person name="Mikula A."/>
            <person name="Bishai W."/>
            <person name="Jacobs W.R. Jr."/>
            <person name="Venter J.C."/>
            <person name="Fraser C.M."/>
        </authorList>
    </citation>
    <scope>NUCLEOTIDE SEQUENCE [LARGE SCALE GENOMIC DNA]</scope>
    <source>
        <strain>CDC 1551 / Oshkosh</strain>
    </source>
</reference>
<feature type="chain" id="PRO_0000428114" description="Polyphosphate kinase">
    <location>
        <begin position="1"/>
        <end position="742"/>
    </location>
</feature>
<feature type="region of interest" description="Disordered" evidence="2">
    <location>
        <begin position="718"/>
        <end position="742"/>
    </location>
</feature>
<feature type="compositionally biased region" description="Basic and acidic residues" evidence="2">
    <location>
        <begin position="726"/>
        <end position="742"/>
    </location>
</feature>
<feature type="active site" description="Phosphohistidine intermediate" evidence="1">
    <location>
        <position position="491"/>
    </location>
</feature>
<feature type="binding site" evidence="1">
    <location>
        <position position="91"/>
    </location>
    <ligand>
        <name>ATP</name>
        <dbReference type="ChEBI" id="CHEBI:30616"/>
    </ligand>
</feature>
<feature type="binding site" evidence="1">
    <location>
        <position position="431"/>
    </location>
    <ligand>
        <name>Mg(2+)</name>
        <dbReference type="ChEBI" id="CHEBI:18420"/>
    </ligand>
</feature>
<feature type="binding site" evidence="1">
    <location>
        <position position="461"/>
    </location>
    <ligand>
        <name>Mg(2+)</name>
        <dbReference type="ChEBI" id="CHEBI:18420"/>
    </ligand>
</feature>
<feature type="binding site" evidence="1">
    <location>
        <position position="524"/>
    </location>
    <ligand>
        <name>ATP</name>
        <dbReference type="ChEBI" id="CHEBI:30616"/>
    </ligand>
</feature>
<feature type="binding site" evidence="1">
    <location>
        <position position="624"/>
    </location>
    <ligand>
        <name>ATP</name>
        <dbReference type="ChEBI" id="CHEBI:30616"/>
    </ligand>
</feature>
<feature type="binding site" evidence="1">
    <location>
        <position position="652"/>
    </location>
    <ligand>
        <name>ATP</name>
        <dbReference type="ChEBI" id="CHEBI:30616"/>
    </ligand>
</feature>
<accession>P9WHV8</accession>
<accession>L0TCT9</accession>
<accession>P65768</accession>
<accession>P95111</accession>
<protein>
    <recommendedName>
        <fullName evidence="1">Polyphosphate kinase</fullName>
        <ecNumber evidence="1">2.7.4.1</ecNumber>
    </recommendedName>
    <alternativeName>
        <fullName evidence="1">ATP-polyphosphate phosphotransferase</fullName>
    </alternativeName>
    <alternativeName>
        <fullName evidence="1">Polyphosphoric acid kinase</fullName>
    </alternativeName>
</protein>
<sequence length="742" mass="83039">MMSNDRKVTEIENSPVTEVRPEEHAWYPDDSALAAPPAATPAAISDQLPSDRYLNRELSWLDFNARVLALAADKSMPLLERAKFLAIFASNLDEFYMVRVAGLKRRDEMGLSVRSADGLTPREQLGRIGEQTQQLASRHARVFLDSVLPALGEEGIYIVTWADLDQAERDRLSTYFNEQVFPVLTPLAVDPAHPFPFVSGLSLNLAVTVRQPEDGTQHFARVKVPDNVDRFVELAAREASEEAAGTEGRTALRFLPMEELIAAFLPVLFPGMEIVEHHAFRITRNADFEVEEDRDEDLLQALERELARRRFGSPVRLEIADDMTESMLELLLRELDVHPGDVIEVPGLLDLSSLWQIYAVDRPTLKDRTFVPATHPAFAERETPKSIFATLREGDVLVHHPYDSFSTSVQRFIEQAAADPNVLAIKQTLYRTSGDSPIVRALIDAAEAGKQVVALVEIKARFDEQANIAWARALEQAGVHVAYGLVGLKTHCKTALVVRREGPTIRRYCHVGTGNYNSKTARLYEDVGLLTAAPDIGADLTDLFNSLTGYSRKLSYRNLLVAPHGIRAGIIDRVEREVAAHRAEGAHNGKGRIRLKMNALVDEQVIDALYRASRAGVRIEVVVRGICALRPGAQGISENIIVRSILGRFLEHSRILHFRAIDEFWIGSADMMHRNLDRRVEVMAQVKNPRLTAQLDELFESALDPCTRCWELGPDGQWTASPQEGHSVRDHQESLMERHRSP</sequence>